<reference key="1">
    <citation type="journal article" date="2000" name="Nature">
        <title>Complete genome sequence of Pseudomonas aeruginosa PAO1, an opportunistic pathogen.</title>
        <authorList>
            <person name="Stover C.K."/>
            <person name="Pham X.-Q.T."/>
            <person name="Erwin A.L."/>
            <person name="Mizoguchi S.D."/>
            <person name="Warrener P."/>
            <person name="Hickey M.J."/>
            <person name="Brinkman F.S.L."/>
            <person name="Hufnagle W.O."/>
            <person name="Kowalik D.J."/>
            <person name="Lagrou M."/>
            <person name="Garber R.L."/>
            <person name="Goltry L."/>
            <person name="Tolentino E."/>
            <person name="Westbrock-Wadman S."/>
            <person name="Yuan Y."/>
            <person name="Brody L.L."/>
            <person name="Coulter S.N."/>
            <person name="Folger K.R."/>
            <person name="Kas A."/>
            <person name="Larbig K."/>
            <person name="Lim R.M."/>
            <person name="Smith K.A."/>
            <person name="Spencer D.H."/>
            <person name="Wong G.K.-S."/>
            <person name="Wu Z."/>
            <person name="Paulsen I.T."/>
            <person name="Reizer J."/>
            <person name="Saier M.H. Jr."/>
            <person name="Hancock R.E.W."/>
            <person name="Lory S."/>
            <person name="Olson M.V."/>
        </authorList>
    </citation>
    <scope>NUCLEOTIDE SEQUENCE [LARGE SCALE GENOMIC DNA]</scope>
    <source>
        <strain>ATCC 15692 / DSM 22644 / CIP 104116 / JCM 14847 / LMG 12228 / 1C / PRS 101 / PAO1</strain>
    </source>
</reference>
<feature type="chain" id="PRO_0000180512" description="DNA primase">
    <location>
        <begin position="1"/>
        <end position="664"/>
    </location>
</feature>
<feature type="domain" description="Toprim" evidence="1">
    <location>
        <begin position="262"/>
        <end position="344"/>
    </location>
</feature>
<feature type="zinc finger region" description="CHC2-type" evidence="1">
    <location>
        <begin position="40"/>
        <end position="64"/>
    </location>
</feature>
<feature type="region of interest" description="Disordered" evidence="2">
    <location>
        <begin position="94"/>
        <end position="115"/>
    </location>
</feature>
<feature type="region of interest" description="Disordered" evidence="2">
    <location>
        <begin position="483"/>
        <end position="521"/>
    </location>
</feature>
<feature type="compositionally biased region" description="Basic and acidic residues" evidence="2">
    <location>
        <begin position="94"/>
        <end position="104"/>
    </location>
</feature>
<feature type="compositionally biased region" description="Basic and acidic residues" evidence="2">
    <location>
        <begin position="487"/>
        <end position="515"/>
    </location>
</feature>
<feature type="binding site" evidence="1">
    <location>
        <position position="268"/>
    </location>
    <ligand>
        <name>Mg(2+)</name>
        <dbReference type="ChEBI" id="CHEBI:18420"/>
        <label>1</label>
        <note>catalytic</note>
    </ligand>
</feature>
<feature type="binding site" evidence="1">
    <location>
        <position position="312"/>
    </location>
    <ligand>
        <name>Mg(2+)</name>
        <dbReference type="ChEBI" id="CHEBI:18420"/>
        <label>1</label>
        <note>catalytic</note>
    </ligand>
</feature>
<feature type="binding site" evidence="1">
    <location>
        <position position="312"/>
    </location>
    <ligand>
        <name>Mg(2+)</name>
        <dbReference type="ChEBI" id="CHEBI:18420"/>
        <label>2</label>
    </ligand>
</feature>
<feature type="binding site" evidence="1">
    <location>
        <position position="314"/>
    </location>
    <ligand>
        <name>Mg(2+)</name>
        <dbReference type="ChEBI" id="CHEBI:18420"/>
        <label>2</label>
    </ligand>
</feature>
<feature type="helix" evidence="3">
    <location>
        <begin position="117"/>
        <end position="134"/>
    </location>
</feature>
<feature type="helix" evidence="3">
    <location>
        <begin position="138"/>
        <end position="146"/>
    </location>
</feature>
<feature type="turn" evidence="3">
    <location>
        <begin position="147"/>
        <end position="149"/>
    </location>
</feature>
<feature type="helix" evidence="3">
    <location>
        <begin position="153"/>
        <end position="157"/>
    </location>
</feature>
<feature type="strand" evidence="3">
    <location>
        <begin position="161"/>
        <end position="163"/>
    </location>
</feature>
<feature type="strand" evidence="3">
    <location>
        <begin position="165"/>
        <end position="167"/>
    </location>
</feature>
<feature type="helix" evidence="3">
    <location>
        <begin position="169"/>
        <end position="174"/>
    </location>
</feature>
<feature type="helix" evidence="3">
    <location>
        <begin position="178"/>
        <end position="186"/>
    </location>
</feature>
<feature type="strand" evidence="3">
    <location>
        <begin position="189"/>
        <end position="192"/>
    </location>
</feature>
<feature type="turn" evidence="3">
    <location>
        <begin position="194"/>
        <end position="196"/>
    </location>
</feature>
<feature type="strand" evidence="3">
    <location>
        <begin position="199"/>
        <end position="203"/>
    </location>
</feature>
<feature type="strand" evidence="3">
    <location>
        <begin position="205"/>
        <end position="212"/>
    </location>
</feature>
<feature type="strand" evidence="3">
    <location>
        <begin position="218"/>
        <end position="228"/>
    </location>
</feature>
<feature type="strand" evidence="3">
    <location>
        <begin position="232"/>
        <end position="235"/>
    </location>
</feature>
<feature type="turn" evidence="3">
    <location>
        <begin position="244"/>
        <end position="246"/>
    </location>
</feature>
<feature type="helix" evidence="3">
    <location>
        <begin position="251"/>
        <end position="257"/>
    </location>
</feature>
<feature type="strand" evidence="3">
    <location>
        <begin position="262"/>
        <end position="269"/>
    </location>
</feature>
<feature type="helix" evidence="3">
    <location>
        <begin position="270"/>
        <end position="278"/>
    </location>
</feature>
<feature type="strand" evidence="3">
    <location>
        <begin position="284"/>
        <end position="286"/>
    </location>
</feature>
<feature type="strand" evidence="3">
    <location>
        <begin position="288"/>
        <end position="290"/>
    </location>
</feature>
<feature type="helix" evidence="3">
    <location>
        <begin position="294"/>
        <end position="301"/>
    </location>
</feature>
<feature type="strand" evidence="3">
    <location>
        <begin position="305"/>
        <end position="314"/>
    </location>
</feature>
<feature type="helix" evidence="3">
    <location>
        <begin position="315"/>
        <end position="328"/>
    </location>
</feature>
<feature type="helix" evidence="3">
    <location>
        <begin position="329"/>
        <end position="331"/>
    </location>
</feature>
<feature type="strand" evidence="3">
    <location>
        <begin position="337"/>
        <end position="345"/>
    </location>
</feature>
<feature type="helix" evidence="3">
    <location>
        <begin position="349"/>
        <end position="368"/>
    </location>
</feature>
<feature type="helix" evidence="3">
    <location>
        <begin position="372"/>
        <end position="383"/>
    </location>
</feature>
<feature type="helix" evidence="3">
    <location>
        <begin position="389"/>
        <end position="403"/>
    </location>
</feature>
<feature type="helix" evidence="3">
    <location>
        <begin position="409"/>
        <end position="423"/>
    </location>
</feature>
<feature type="helix" evidence="3">
    <location>
        <begin position="427"/>
        <end position="432"/>
    </location>
</feature>
<dbReference type="EC" id="2.7.7.101" evidence="1"/>
<dbReference type="EMBL" id="AE004091">
    <property type="protein sequence ID" value="AAG03966.1"/>
    <property type="molecule type" value="Genomic_DNA"/>
</dbReference>
<dbReference type="PIR" id="E83572">
    <property type="entry name" value="E83572"/>
</dbReference>
<dbReference type="PIR" id="S15899">
    <property type="entry name" value="S15899"/>
</dbReference>
<dbReference type="RefSeq" id="NP_249268.1">
    <property type="nucleotide sequence ID" value="NC_002516.2"/>
</dbReference>
<dbReference type="RefSeq" id="WP_003099594.1">
    <property type="nucleotide sequence ID" value="NZ_QZGE01000010.1"/>
</dbReference>
<dbReference type="PDB" id="5VAZ">
    <property type="method" value="X-ray"/>
    <property type="resolution" value="2.40 A"/>
    <property type="chains" value="A/B=106-486"/>
</dbReference>
<dbReference type="PDBsum" id="5VAZ"/>
<dbReference type="SMR" id="Q9I5W0"/>
<dbReference type="FunCoup" id="Q9I5W0">
    <property type="interactions" value="314"/>
</dbReference>
<dbReference type="STRING" id="208964.PA0577"/>
<dbReference type="PaxDb" id="208964-PA0577"/>
<dbReference type="GeneID" id="882047"/>
<dbReference type="KEGG" id="pae:PA0577"/>
<dbReference type="PATRIC" id="fig|208964.12.peg.612"/>
<dbReference type="PseudoCAP" id="PA0577"/>
<dbReference type="HOGENOM" id="CLU_013501_5_4_6"/>
<dbReference type="InParanoid" id="Q9I5W0"/>
<dbReference type="OrthoDB" id="9803773at2"/>
<dbReference type="PhylomeDB" id="Q9I5W0"/>
<dbReference type="BioCyc" id="PAER208964:G1FZ6-584-MONOMER"/>
<dbReference type="Proteomes" id="UP000002438">
    <property type="component" value="Chromosome"/>
</dbReference>
<dbReference type="GO" id="GO:0005737">
    <property type="term" value="C:cytoplasm"/>
    <property type="evidence" value="ECO:0000318"/>
    <property type="project" value="GO_Central"/>
</dbReference>
<dbReference type="GO" id="GO:0000428">
    <property type="term" value="C:DNA-directed RNA polymerase complex"/>
    <property type="evidence" value="ECO:0007669"/>
    <property type="project" value="UniProtKB-KW"/>
</dbReference>
<dbReference type="GO" id="GO:1990077">
    <property type="term" value="C:primosome complex"/>
    <property type="evidence" value="ECO:0007669"/>
    <property type="project" value="UniProtKB-KW"/>
</dbReference>
<dbReference type="GO" id="GO:0003677">
    <property type="term" value="F:DNA binding"/>
    <property type="evidence" value="ECO:0007669"/>
    <property type="project" value="UniProtKB-KW"/>
</dbReference>
<dbReference type="GO" id="GO:0003899">
    <property type="term" value="F:DNA-directed RNA polymerase activity"/>
    <property type="evidence" value="ECO:0007669"/>
    <property type="project" value="InterPro"/>
</dbReference>
<dbReference type="GO" id="GO:0008270">
    <property type="term" value="F:zinc ion binding"/>
    <property type="evidence" value="ECO:0007669"/>
    <property type="project" value="UniProtKB-UniRule"/>
</dbReference>
<dbReference type="GO" id="GO:0006269">
    <property type="term" value="P:DNA replication, synthesis of primer"/>
    <property type="evidence" value="ECO:0000318"/>
    <property type="project" value="GO_Central"/>
</dbReference>
<dbReference type="CDD" id="cd03364">
    <property type="entry name" value="TOPRIM_DnaG_primases"/>
    <property type="match status" value="1"/>
</dbReference>
<dbReference type="FunFam" id="3.40.1360.10:FF:000002">
    <property type="entry name" value="DNA primase"/>
    <property type="match status" value="1"/>
</dbReference>
<dbReference type="FunFam" id="3.90.580.10:FF:000001">
    <property type="entry name" value="DNA primase"/>
    <property type="match status" value="1"/>
</dbReference>
<dbReference type="FunFam" id="3.90.980.10:FF:000001">
    <property type="entry name" value="DNA primase"/>
    <property type="match status" value="1"/>
</dbReference>
<dbReference type="Gene3D" id="3.40.1360.10">
    <property type="match status" value="1"/>
</dbReference>
<dbReference type="Gene3D" id="3.90.980.10">
    <property type="entry name" value="DNA primase, catalytic core, N-terminal domain"/>
    <property type="match status" value="1"/>
</dbReference>
<dbReference type="Gene3D" id="1.10.860.10">
    <property type="entry name" value="DNAb Helicase, Chain A"/>
    <property type="match status" value="1"/>
</dbReference>
<dbReference type="Gene3D" id="1.20.50.20">
    <property type="entry name" value="DnaG, RNA polymerase domain, helical bundle"/>
    <property type="match status" value="1"/>
</dbReference>
<dbReference type="Gene3D" id="3.90.580.10">
    <property type="entry name" value="Zinc finger, CHC2-type domain"/>
    <property type="match status" value="1"/>
</dbReference>
<dbReference type="HAMAP" id="MF_00974">
    <property type="entry name" value="DNA_primase_DnaG"/>
    <property type="match status" value="1"/>
</dbReference>
<dbReference type="InterPro" id="IPR016136">
    <property type="entry name" value="DNA_helicase_N/primase_C"/>
</dbReference>
<dbReference type="InterPro" id="IPR037068">
    <property type="entry name" value="DNA_primase_core_N_sf"/>
</dbReference>
<dbReference type="InterPro" id="IPR019475">
    <property type="entry name" value="DNA_primase_DnaB-bd"/>
</dbReference>
<dbReference type="InterPro" id="IPR006295">
    <property type="entry name" value="DNA_primase_DnaG"/>
</dbReference>
<dbReference type="InterPro" id="IPR013173">
    <property type="entry name" value="DNA_primase_DnaG_DnaB-bd_dom"/>
</dbReference>
<dbReference type="InterPro" id="IPR036977">
    <property type="entry name" value="DNA_primase_Znf_CHC2"/>
</dbReference>
<dbReference type="InterPro" id="IPR030846">
    <property type="entry name" value="DnaG_bac"/>
</dbReference>
<dbReference type="InterPro" id="IPR013264">
    <property type="entry name" value="DNAG_N"/>
</dbReference>
<dbReference type="InterPro" id="IPR050219">
    <property type="entry name" value="DnaG_primase"/>
</dbReference>
<dbReference type="InterPro" id="IPR034151">
    <property type="entry name" value="TOPRIM_DnaG_bac"/>
</dbReference>
<dbReference type="InterPro" id="IPR006171">
    <property type="entry name" value="TOPRIM_dom"/>
</dbReference>
<dbReference type="InterPro" id="IPR002694">
    <property type="entry name" value="Znf_CHC2"/>
</dbReference>
<dbReference type="NCBIfam" id="TIGR01391">
    <property type="entry name" value="dnaG"/>
    <property type="match status" value="1"/>
</dbReference>
<dbReference type="PANTHER" id="PTHR30313">
    <property type="entry name" value="DNA PRIMASE"/>
    <property type="match status" value="1"/>
</dbReference>
<dbReference type="PANTHER" id="PTHR30313:SF2">
    <property type="entry name" value="DNA PRIMASE"/>
    <property type="match status" value="1"/>
</dbReference>
<dbReference type="Pfam" id="PF10410">
    <property type="entry name" value="DnaB_bind"/>
    <property type="match status" value="1"/>
</dbReference>
<dbReference type="Pfam" id="PF08278">
    <property type="entry name" value="DnaG_DnaB_bind"/>
    <property type="match status" value="1"/>
</dbReference>
<dbReference type="Pfam" id="PF08275">
    <property type="entry name" value="DNAG_N"/>
    <property type="match status" value="1"/>
</dbReference>
<dbReference type="Pfam" id="PF13155">
    <property type="entry name" value="Toprim_2"/>
    <property type="match status" value="1"/>
</dbReference>
<dbReference type="Pfam" id="PF01807">
    <property type="entry name" value="Zn_ribbon_DnaG"/>
    <property type="match status" value="1"/>
</dbReference>
<dbReference type="SMART" id="SM00766">
    <property type="entry name" value="DnaG_DnaB_bind"/>
    <property type="match status" value="1"/>
</dbReference>
<dbReference type="SMART" id="SM00493">
    <property type="entry name" value="TOPRIM"/>
    <property type="match status" value="1"/>
</dbReference>
<dbReference type="SMART" id="SM00400">
    <property type="entry name" value="ZnF_CHCC"/>
    <property type="match status" value="1"/>
</dbReference>
<dbReference type="SUPFAM" id="SSF56731">
    <property type="entry name" value="DNA primase core"/>
    <property type="match status" value="1"/>
</dbReference>
<dbReference type="SUPFAM" id="SSF117023">
    <property type="entry name" value="DNA primase DnaG, C-terminal domain"/>
    <property type="match status" value="1"/>
</dbReference>
<dbReference type="SUPFAM" id="SSF57783">
    <property type="entry name" value="Zinc beta-ribbon"/>
    <property type="match status" value="1"/>
</dbReference>
<dbReference type="PROSITE" id="PS50880">
    <property type="entry name" value="TOPRIM"/>
    <property type="match status" value="1"/>
</dbReference>
<proteinExistence type="evidence at protein level"/>
<comment type="function">
    <text evidence="1">RNA polymerase that catalyzes the synthesis of short RNA molecules used as primers for DNA polymerase during DNA replication.</text>
</comment>
<comment type="catalytic activity">
    <reaction evidence="1">
        <text>ssDNA + n NTP = ssDNA/pppN(pN)n-1 hybrid + (n-1) diphosphate.</text>
        <dbReference type="EC" id="2.7.7.101"/>
    </reaction>
</comment>
<comment type="cofactor">
    <cofactor evidence="1">
        <name>Zn(2+)</name>
        <dbReference type="ChEBI" id="CHEBI:29105"/>
    </cofactor>
    <text evidence="1">Binds 1 zinc ion per monomer.</text>
</comment>
<comment type="cofactor">
    <cofactor evidence="1">
        <name>Mg(2+)</name>
        <dbReference type="ChEBI" id="CHEBI:18420"/>
    </cofactor>
    <text evidence="1">Binds two Mg(2+) per subunit.</text>
</comment>
<comment type="subunit">
    <text evidence="1">Monomer. Interacts with DnaB.</text>
</comment>
<comment type="domain">
    <text evidence="1">Contains an N-terminal zinc-binding domain, a central core domain that contains the primase activity, and a C-terminal DnaB-binding domain.</text>
</comment>
<comment type="similarity">
    <text evidence="1">Belongs to the DnaG primase family.</text>
</comment>
<sequence length="664" mass="74176">MAGLIPQSFIDDLLNRTDIVEVVSSRIQLKKTGKNYSACCPFHKEKTPSFTVSPDKQFYYCFGCGAGGNALGFVMDHDQLEFPQAVEELAKRAGMDVPREERGGRGHTPRQPTDSPLYPLLSAAAEFYKQALKSHPARKAAVNYLKGRGLTGEIARDFGLGFAPPGWDNLLKHLGGDNLQLKAMLDAGLLVENSDTGKRYDRFRDRVMFPIRDSRGRIIAFGGRVLGDDKPKYLNSPETPVFHKGQELYGLYEARQKNRDLDEIMVVEGYMDVIALAQQGIRNAVATLGTATSEEHIKRLFRLVPSILFCFDGDQAGRKAAWRALESVLPNLQDGKRVRFLFLPEGEDPDSLVRAEGEDAFRARITQQAQPLAEYFFQQLMLEADPATLEGKAHLATLAAPLLEKIPGNNLRLLMRQRLSEITGLSGENIGQLAHHSPPPSSMDHGASGVLDGDDYFAASAYYENEPSHAPFDAAPGYVEAQPRKSWNKDKKPWDGKKWDGKKKWDKGGRGDFKAPQRTPVSVESTTLNALRTLLHHPQLALKVDDAGTLAREQDTYAQLLVSLLEALQKNPRQSSMQLIARWHGTPQGRLLQALGEKEWLIVQENLEKQFFDTITKLSESQRFGEREERLRSVMQKSYSELTDEEKALLREHYSVAASSPSQS</sequence>
<evidence type="ECO:0000255" key="1">
    <source>
        <dbReference type="HAMAP-Rule" id="MF_00974"/>
    </source>
</evidence>
<evidence type="ECO:0000256" key="2">
    <source>
        <dbReference type="SAM" id="MobiDB-lite"/>
    </source>
</evidence>
<evidence type="ECO:0007829" key="3">
    <source>
        <dbReference type="PDB" id="5VAZ"/>
    </source>
</evidence>
<name>DNAG_PSEAE</name>
<organism>
    <name type="scientific">Pseudomonas aeruginosa (strain ATCC 15692 / DSM 22644 / CIP 104116 / JCM 14847 / LMG 12228 / 1C / PRS 101 / PAO1)</name>
    <dbReference type="NCBI Taxonomy" id="208964"/>
    <lineage>
        <taxon>Bacteria</taxon>
        <taxon>Pseudomonadati</taxon>
        <taxon>Pseudomonadota</taxon>
        <taxon>Gammaproteobacteria</taxon>
        <taxon>Pseudomonadales</taxon>
        <taxon>Pseudomonadaceae</taxon>
        <taxon>Pseudomonas</taxon>
    </lineage>
</organism>
<protein>
    <recommendedName>
        <fullName evidence="1">DNA primase</fullName>
        <ecNumber evidence="1">2.7.7.101</ecNumber>
    </recommendedName>
</protein>
<keyword id="KW-0002">3D-structure</keyword>
<keyword id="KW-0235">DNA replication</keyword>
<keyword id="KW-0238">DNA-binding</keyword>
<keyword id="KW-0240">DNA-directed RNA polymerase</keyword>
<keyword id="KW-0460">Magnesium</keyword>
<keyword id="KW-0479">Metal-binding</keyword>
<keyword id="KW-0548">Nucleotidyltransferase</keyword>
<keyword id="KW-0639">Primosome</keyword>
<keyword id="KW-1185">Reference proteome</keyword>
<keyword id="KW-0804">Transcription</keyword>
<keyword id="KW-0808">Transferase</keyword>
<keyword id="KW-0862">Zinc</keyword>
<keyword id="KW-0863">Zinc-finger</keyword>
<accession>Q9I5W0</accession>
<gene>
    <name evidence="1" type="primary">dnaG</name>
    <name type="ordered locus">PA0577</name>
</gene>